<reference key="1">
    <citation type="journal article" date="2005" name="Genome Res.">
        <title>Comparative and functional genomic analyses of the pathogenicity of phytopathogen Xanthomonas campestris pv. campestris.</title>
        <authorList>
            <person name="Qian W."/>
            <person name="Jia Y."/>
            <person name="Ren S.-X."/>
            <person name="He Y.-Q."/>
            <person name="Feng J.-X."/>
            <person name="Lu L.-F."/>
            <person name="Sun Q."/>
            <person name="Ying G."/>
            <person name="Tang D.-J."/>
            <person name="Tang H."/>
            <person name="Wu W."/>
            <person name="Hao P."/>
            <person name="Wang L."/>
            <person name="Jiang B.-L."/>
            <person name="Zeng S."/>
            <person name="Gu W.-Y."/>
            <person name="Lu G."/>
            <person name="Rong L."/>
            <person name="Tian Y."/>
            <person name="Yao Z."/>
            <person name="Fu G."/>
            <person name="Chen B."/>
            <person name="Fang R."/>
            <person name="Qiang B."/>
            <person name="Chen Z."/>
            <person name="Zhao G.-P."/>
            <person name="Tang J.-L."/>
            <person name="He C."/>
        </authorList>
    </citation>
    <scope>NUCLEOTIDE SEQUENCE [LARGE SCALE GENOMIC DNA]</scope>
    <source>
        <strain>8004</strain>
    </source>
</reference>
<name>EX7S_XANC8</name>
<keyword id="KW-0963">Cytoplasm</keyword>
<keyword id="KW-0269">Exonuclease</keyword>
<keyword id="KW-0378">Hydrolase</keyword>
<keyword id="KW-0540">Nuclease</keyword>
<gene>
    <name evidence="1" type="primary">xseB</name>
    <name type="ordered locus">XC_1517</name>
</gene>
<feature type="chain" id="PRO_0000303768" description="Exodeoxyribonuclease 7 small subunit">
    <location>
        <begin position="1"/>
        <end position="87"/>
    </location>
</feature>
<dbReference type="EC" id="3.1.11.6" evidence="1"/>
<dbReference type="EMBL" id="CP000050">
    <property type="protein sequence ID" value="AAY48585.1"/>
    <property type="molecule type" value="Genomic_DNA"/>
</dbReference>
<dbReference type="RefSeq" id="WP_011037729.1">
    <property type="nucleotide sequence ID" value="NZ_CP155948.1"/>
</dbReference>
<dbReference type="SMR" id="Q4UWI8"/>
<dbReference type="KEGG" id="xcb:XC_1517"/>
<dbReference type="HOGENOM" id="CLU_145918_3_3_6"/>
<dbReference type="Proteomes" id="UP000000420">
    <property type="component" value="Chromosome"/>
</dbReference>
<dbReference type="GO" id="GO:0005829">
    <property type="term" value="C:cytosol"/>
    <property type="evidence" value="ECO:0007669"/>
    <property type="project" value="TreeGrafter"/>
</dbReference>
<dbReference type="GO" id="GO:0009318">
    <property type="term" value="C:exodeoxyribonuclease VII complex"/>
    <property type="evidence" value="ECO:0007669"/>
    <property type="project" value="InterPro"/>
</dbReference>
<dbReference type="GO" id="GO:0008855">
    <property type="term" value="F:exodeoxyribonuclease VII activity"/>
    <property type="evidence" value="ECO:0007669"/>
    <property type="project" value="UniProtKB-UniRule"/>
</dbReference>
<dbReference type="GO" id="GO:0006308">
    <property type="term" value="P:DNA catabolic process"/>
    <property type="evidence" value="ECO:0007669"/>
    <property type="project" value="UniProtKB-UniRule"/>
</dbReference>
<dbReference type="Gene3D" id="1.10.287.1040">
    <property type="entry name" value="Exonuclease VII, small subunit"/>
    <property type="match status" value="1"/>
</dbReference>
<dbReference type="HAMAP" id="MF_00337">
    <property type="entry name" value="Exonuc_7_S"/>
    <property type="match status" value="1"/>
</dbReference>
<dbReference type="InterPro" id="IPR003761">
    <property type="entry name" value="Exonuc_VII_S"/>
</dbReference>
<dbReference type="InterPro" id="IPR037004">
    <property type="entry name" value="Exonuc_VII_ssu_sf"/>
</dbReference>
<dbReference type="NCBIfam" id="NF002140">
    <property type="entry name" value="PRK00977.1-4"/>
    <property type="match status" value="1"/>
</dbReference>
<dbReference type="NCBIfam" id="TIGR01280">
    <property type="entry name" value="xseB"/>
    <property type="match status" value="1"/>
</dbReference>
<dbReference type="PANTHER" id="PTHR34137">
    <property type="entry name" value="EXODEOXYRIBONUCLEASE 7 SMALL SUBUNIT"/>
    <property type="match status" value="1"/>
</dbReference>
<dbReference type="PANTHER" id="PTHR34137:SF1">
    <property type="entry name" value="EXODEOXYRIBONUCLEASE 7 SMALL SUBUNIT"/>
    <property type="match status" value="1"/>
</dbReference>
<dbReference type="Pfam" id="PF02609">
    <property type="entry name" value="Exonuc_VII_S"/>
    <property type="match status" value="1"/>
</dbReference>
<dbReference type="PIRSF" id="PIRSF006488">
    <property type="entry name" value="Exonuc_VII_S"/>
    <property type="match status" value="1"/>
</dbReference>
<dbReference type="SUPFAM" id="SSF116842">
    <property type="entry name" value="XseB-like"/>
    <property type="match status" value="1"/>
</dbReference>
<evidence type="ECO:0000255" key="1">
    <source>
        <dbReference type="HAMAP-Rule" id="MF_00337"/>
    </source>
</evidence>
<sequence>MAKKSLNESSPVARFEQSLEELEQLVQKMEVGEMSLEQSLTAYERGIGLYRDCQQALEQAELRVRLVTDPARPEQAEAFEPPSLDGG</sequence>
<proteinExistence type="inferred from homology"/>
<accession>Q4UWI8</accession>
<protein>
    <recommendedName>
        <fullName evidence="1">Exodeoxyribonuclease 7 small subunit</fullName>
        <ecNumber evidence="1">3.1.11.6</ecNumber>
    </recommendedName>
    <alternativeName>
        <fullName evidence="1">Exodeoxyribonuclease VII small subunit</fullName>
        <shortName evidence="1">Exonuclease VII small subunit</shortName>
    </alternativeName>
</protein>
<comment type="function">
    <text evidence="1">Bidirectionally degrades single-stranded DNA into large acid-insoluble oligonucleotides, which are then degraded further into small acid-soluble oligonucleotides.</text>
</comment>
<comment type="catalytic activity">
    <reaction evidence="1">
        <text>Exonucleolytic cleavage in either 5'- to 3'- or 3'- to 5'-direction to yield nucleoside 5'-phosphates.</text>
        <dbReference type="EC" id="3.1.11.6"/>
    </reaction>
</comment>
<comment type="subunit">
    <text evidence="1">Heterooligomer composed of large and small subunits.</text>
</comment>
<comment type="subcellular location">
    <subcellularLocation>
        <location evidence="1">Cytoplasm</location>
    </subcellularLocation>
</comment>
<comment type="similarity">
    <text evidence="1">Belongs to the XseB family.</text>
</comment>
<organism>
    <name type="scientific">Xanthomonas campestris pv. campestris (strain 8004)</name>
    <dbReference type="NCBI Taxonomy" id="314565"/>
    <lineage>
        <taxon>Bacteria</taxon>
        <taxon>Pseudomonadati</taxon>
        <taxon>Pseudomonadota</taxon>
        <taxon>Gammaproteobacteria</taxon>
        <taxon>Lysobacterales</taxon>
        <taxon>Lysobacteraceae</taxon>
        <taxon>Xanthomonas</taxon>
    </lineage>
</organism>